<organism>
    <name type="scientific">Talaromyces islandicus</name>
    <name type="common">Penicillium islandicum</name>
    <dbReference type="NCBI Taxonomy" id="28573"/>
    <lineage>
        <taxon>Eukaryota</taxon>
        <taxon>Fungi</taxon>
        <taxon>Dikarya</taxon>
        <taxon>Ascomycota</taxon>
        <taxon>Pezizomycotina</taxon>
        <taxon>Eurotiomycetes</taxon>
        <taxon>Eurotiomycetidae</taxon>
        <taxon>Eurotiales</taxon>
        <taxon>Trichocomaceae</taxon>
        <taxon>Talaromyces</taxon>
        <taxon>Talaromyces sect. Islandici</taxon>
    </lineage>
</organism>
<evidence type="ECO:0000255" key="1"/>
<evidence type="ECO:0000255" key="2">
    <source>
        <dbReference type="PROSITE-ProRule" id="PRU00498"/>
    </source>
</evidence>
<evidence type="ECO:0000269" key="3">
    <source>
    </source>
</evidence>
<evidence type="ECO:0000269" key="4">
    <source>
    </source>
</evidence>
<evidence type="ECO:0000303" key="5">
    <source>
    </source>
</evidence>
<evidence type="ECO:0000305" key="6"/>
<evidence type="ECO:0000305" key="7">
    <source>
    </source>
</evidence>
<comment type="function">
    <text evidence="3 4 7">MFS-type transporter; part of the gene cluster that mediates the biosynthesis of the mycotoxin cyclochlorotine, a hepatotoxic and carcinogenic cyclic chlorinated pentapeptide (PubMed:26954535, PubMed:33736433). Most likely responsible for cyclochlorotine secretion and thereby may contribute to intrinsic resistance (Probable).</text>
</comment>
<comment type="pathway">
    <text evidence="4">Mycotoxin biosynthesis.</text>
</comment>
<comment type="subcellular location">
    <subcellularLocation>
        <location evidence="1">Membrane</location>
        <topology evidence="1">Multi-pass membrane protein</topology>
    </subcellularLocation>
</comment>
<comment type="disruption phenotype">
    <text evidence="4">Impairs the production of cyclochlorotine.</text>
</comment>
<comment type="similarity">
    <text evidence="6">Belongs to the major facilitator superfamily.</text>
</comment>
<protein>
    <recommendedName>
        <fullName evidence="5">MFS-type transporter cctQ</fullName>
    </recommendedName>
    <alternativeName>
        <fullName evidence="5">Cyclochlorotine biosynthesis protein Q</fullName>
    </alternativeName>
</protein>
<gene>
    <name evidence="5" type="primary">cctQ</name>
    <name type="ORF">PISL3812_02622</name>
</gene>
<name>CCTQ_TALIS</name>
<proteinExistence type="inferred from homology"/>
<sequence>MGQKETFYRNWNGGGDFLRTVFGLGGLDHTNDSPAEQRYVNSLETSSMMAENDIGSLMPLVYTTVAFFVAVVLPHGSPMSNSHSSKKAFALLNWPRVLTSRNIWSISHGIFAASMFGSFWVQSAVGTIPLFGIVGFSWAVTCRIPYYLLHDELYRSSTQRNRQGDDLTDSQGLIHGIHNFSICLAQIVVLLMINTVWILASDDDGDSFLVWFLLLGGACALLAMYFTTRLREPENIKYEEIAMEEGDYGFSE</sequence>
<accession>A0A0U1LSP7</accession>
<dbReference type="EMBL" id="CVMT01000002">
    <property type="protein sequence ID" value="CRG85575.1"/>
    <property type="molecule type" value="Genomic_DNA"/>
</dbReference>
<dbReference type="GlyCosmos" id="A0A0U1LSP7">
    <property type="glycosylation" value="1 site, No reported glycans"/>
</dbReference>
<dbReference type="OrthoDB" id="4540540at2759"/>
<dbReference type="Proteomes" id="UP000054383">
    <property type="component" value="Unassembled WGS sequence"/>
</dbReference>
<dbReference type="GO" id="GO:0005886">
    <property type="term" value="C:plasma membrane"/>
    <property type="evidence" value="ECO:0007669"/>
    <property type="project" value="TreeGrafter"/>
</dbReference>
<dbReference type="GO" id="GO:0008506">
    <property type="term" value="F:sucrose:proton symporter activity"/>
    <property type="evidence" value="ECO:0007669"/>
    <property type="project" value="TreeGrafter"/>
</dbReference>
<dbReference type="InterPro" id="IPR036259">
    <property type="entry name" value="MFS_trans_sf"/>
</dbReference>
<dbReference type="PANTHER" id="PTHR19432:SF35">
    <property type="entry name" value="SOLUTE CARRIER FAMILY 45 MEMBER 3 ISOFORM X1"/>
    <property type="match status" value="1"/>
</dbReference>
<dbReference type="PANTHER" id="PTHR19432">
    <property type="entry name" value="SUGAR TRANSPORTER"/>
    <property type="match status" value="1"/>
</dbReference>
<dbReference type="SUPFAM" id="SSF103473">
    <property type="entry name" value="MFS general substrate transporter"/>
    <property type="match status" value="1"/>
</dbReference>
<reference key="1">
    <citation type="journal article" date="2015" name="J. Biotechnol.">
        <title>Draft genome sequence of Talaromyces islandicus ('Penicillium islandicum') WF-38-12, a neglected mold with significant biotechnological potential.</title>
        <authorList>
            <person name="Schafhauser T."/>
            <person name="Wibberg D."/>
            <person name="Rueckert C."/>
            <person name="Winkler A."/>
            <person name="Flor L."/>
            <person name="van Pee K.-H."/>
            <person name="Fewer D.P."/>
            <person name="Sivonen K."/>
            <person name="Jahn L."/>
            <person name="Ludwig-Mueller J."/>
            <person name="Caradec T."/>
            <person name="Jacques P."/>
            <person name="Huijbers M.M.E."/>
            <person name="van Berkel W.J.H."/>
            <person name="Weber T."/>
            <person name="Wohlleben W."/>
            <person name="Kalinowski J."/>
        </authorList>
    </citation>
    <scope>NUCLEOTIDE SEQUENCE [LARGE SCALE GENOMIC DNA]</scope>
    <source>
        <strain>ATCC 26535 / WF-38-12</strain>
    </source>
</reference>
<reference key="2">
    <citation type="journal article" date="2016" name="Environ. Microbiol.">
        <title>The cyclochlorotine mycotoxin is produced by the nonribosomal peptide synthetase CctN in Talaromyces islandicus ('Penicillium islandicum').</title>
        <authorList>
            <person name="Schafhauser T."/>
            <person name="Kirchner N."/>
            <person name="Kulik A."/>
            <person name="Huijbers M.M."/>
            <person name="Flor L."/>
            <person name="Caradec T."/>
            <person name="Fewer D.P."/>
            <person name="Gross H."/>
            <person name="Jacques P."/>
            <person name="Jahn L."/>
            <person name="Jokela J."/>
            <person name="Leclere V."/>
            <person name="Ludwig-Mueller J."/>
            <person name="Sivonen K."/>
            <person name="van Berkel W.J."/>
            <person name="Weber T."/>
            <person name="Wohlleben W."/>
            <person name="van Pee K.H."/>
        </authorList>
    </citation>
    <scope>FUNCTION</scope>
</reference>
<reference key="3">
    <citation type="journal article" date="2021" name="Org. Lett.">
        <title>Biosynthesis of cyclochlorotine: identification of the genes involved in oxidative transformations and intramolecular O,N-transacylation.</title>
        <authorList>
            <person name="Jiang Y."/>
            <person name="Ozaki T."/>
            <person name="Liu C."/>
            <person name="Igarashi Y."/>
            <person name="Ye Y."/>
            <person name="Tang S."/>
            <person name="Ye T."/>
            <person name="Maruyama J.I."/>
            <person name="Minami A."/>
            <person name="Oikawa H."/>
        </authorList>
    </citation>
    <scope>FUNCTION</scope>
    <scope>DISRUPTION PHENOTYPE</scope>
    <scope>PATHWAY</scope>
</reference>
<feature type="chain" id="PRO_0000438671" description="MFS-type transporter cctQ">
    <location>
        <begin position="1"/>
        <end position="252"/>
    </location>
</feature>
<feature type="transmembrane region" description="Helical" evidence="1">
    <location>
        <begin position="54"/>
        <end position="74"/>
    </location>
</feature>
<feature type="transmembrane region" description="Helical" evidence="1">
    <location>
        <begin position="116"/>
        <end position="136"/>
    </location>
</feature>
<feature type="transmembrane region" description="Helical" evidence="1">
    <location>
        <begin position="180"/>
        <end position="200"/>
    </location>
</feature>
<feature type="transmembrane region" description="Helical" evidence="1">
    <location>
        <begin position="208"/>
        <end position="228"/>
    </location>
</feature>
<feature type="glycosylation site" description="N-linked (GlcNAc...) asparagine" evidence="2">
    <location>
        <position position="179"/>
    </location>
</feature>
<keyword id="KW-0325">Glycoprotein</keyword>
<keyword id="KW-0472">Membrane</keyword>
<keyword id="KW-1185">Reference proteome</keyword>
<keyword id="KW-0812">Transmembrane</keyword>
<keyword id="KW-1133">Transmembrane helix</keyword>
<keyword id="KW-0813">Transport</keyword>
<keyword id="KW-0843">Virulence</keyword>